<sequence length="559" mass="64368">MANHHRLLRGGGSPAIIGGRITLTAFASTIALFLFTLSFFFASDSNDSPDLLLPGVEYSNGVGSRRSMLDIKSDPLKPRLIQIRKQADDHRSLALAYASYARKLKLENSKLVRIFADLSRNYTDLINKPTYRALYDSDGASIEESVLRQFEKEVKERIKMTRQVIAEAKESFDNQLKIQKLKDTIFAVNEQLTNAKKQGAFSSLIAAKSIPKGLHCLAMRLMEERIAHPEKYTDEGKDRPRELEDPNLYHYAIFSDNVIAASVVVNSAVKNAKEPWKHVFHVVTDKMNLGAMQVMFKLKEYKGAHVEVKAVEDYTFLNSSYVPVLKQLESANLQKFYFENKLENATKDTTNMKFRNPKYLSILNHLRFYLPEMYPKLHRILFLDDDVVVQKDLTGLWEIDMDGKVNGAVETCFGSFHRYAQYMNFSHPLIKEKFNPKACAWAYGMNFFDLDAWRREKCTEEYHYWQNLNENRALWKLGTLPPGLITFYSTTKPLDKSWHVLGLGYNPSISMDEIRNAAVVHFNGNMKPWLDIAMNQFRPLWTKHVDYDLEFVQACNFGL</sequence>
<accession>Q9LSG3</accession>
<reference key="1">
    <citation type="journal article" date="2000" name="DNA Res.">
        <title>Structural analysis of Arabidopsis thaliana chromosome 3. I. Sequence features of the regions of 4,504,864 bp covered by sixty P1 and TAC clones.</title>
        <authorList>
            <person name="Sato S."/>
            <person name="Nakamura Y."/>
            <person name="Kaneko T."/>
            <person name="Katoh T."/>
            <person name="Asamizu E."/>
            <person name="Tabata S."/>
        </authorList>
    </citation>
    <scope>NUCLEOTIDE SEQUENCE [LARGE SCALE GENOMIC DNA]</scope>
    <source>
        <strain>cv. Columbia</strain>
    </source>
</reference>
<reference key="2">
    <citation type="journal article" date="2017" name="Plant J.">
        <title>Araport11: a complete reannotation of the Arabidopsis thaliana reference genome.</title>
        <authorList>
            <person name="Cheng C.Y."/>
            <person name="Krishnakumar V."/>
            <person name="Chan A.P."/>
            <person name="Thibaud-Nissen F."/>
            <person name="Schobel S."/>
            <person name="Town C.D."/>
        </authorList>
    </citation>
    <scope>GENOME REANNOTATION</scope>
    <source>
        <strain>cv. Columbia</strain>
    </source>
</reference>
<reference key="3">
    <citation type="journal article" date="2003" name="Science">
        <title>Empirical analysis of transcriptional activity in the Arabidopsis genome.</title>
        <authorList>
            <person name="Yamada K."/>
            <person name="Lim J."/>
            <person name="Dale J.M."/>
            <person name="Chen H."/>
            <person name="Shinn P."/>
            <person name="Palm C.J."/>
            <person name="Southwick A.M."/>
            <person name="Wu H.C."/>
            <person name="Kim C.J."/>
            <person name="Nguyen M."/>
            <person name="Pham P.K."/>
            <person name="Cheuk R.F."/>
            <person name="Karlin-Newmann G."/>
            <person name="Liu S.X."/>
            <person name="Lam B."/>
            <person name="Sakano H."/>
            <person name="Wu T."/>
            <person name="Yu G."/>
            <person name="Miranda M."/>
            <person name="Quach H.L."/>
            <person name="Tripp M."/>
            <person name="Chang C.H."/>
            <person name="Lee J.M."/>
            <person name="Toriumi M.J."/>
            <person name="Chan M.M."/>
            <person name="Tang C.C."/>
            <person name="Onodera C.S."/>
            <person name="Deng J.M."/>
            <person name="Akiyama K."/>
            <person name="Ansari Y."/>
            <person name="Arakawa T."/>
            <person name="Banh J."/>
            <person name="Banno F."/>
            <person name="Bowser L."/>
            <person name="Brooks S.Y."/>
            <person name="Carninci P."/>
            <person name="Chao Q."/>
            <person name="Choy N."/>
            <person name="Enju A."/>
            <person name="Goldsmith A.D."/>
            <person name="Gurjal M."/>
            <person name="Hansen N.F."/>
            <person name="Hayashizaki Y."/>
            <person name="Johnson-Hopson C."/>
            <person name="Hsuan V.W."/>
            <person name="Iida K."/>
            <person name="Karnes M."/>
            <person name="Khan S."/>
            <person name="Koesema E."/>
            <person name="Ishida J."/>
            <person name="Jiang P.X."/>
            <person name="Jones T."/>
            <person name="Kawai J."/>
            <person name="Kamiya A."/>
            <person name="Meyers C."/>
            <person name="Nakajima M."/>
            <person name="Narusaka M."/>
            <person name="Seki M."/>
            <person name="Sakurai T."/>
            <person name="Satou M."/>
            <person name="Tamse R."/>
            <person name="Vaysberg M."/>
            <person name="Wallender E.K."/>
            <person name="Wong C."/>
            <person name="Yamamura Y."/>
            <person name="Yuan S."/>
            <person name="Shinozaki K."/>
            <person name="Davis R.W."/>
            <person name="Theologis A."/>
            <person name="Ecker J.R."/>
        </authorList>
    </citation>
    <scope>NUCLEOTIDE SEQUENCE [LARGE SCALE MRNA]</scope>
    <source>
        <strain>cv. Columbia</strain>
    </source>
</reference>
<reference key="4">
    <citation type="journal article" date="2002" name="Plant Cell">
        <title>QUASIMODO1 encodes a putative membrane-bound glycosyltransferase required for normal pectin synthesis and cell adhesion in Arabidopsis.</title>
        <authorList>
            <person name="Bouton S."/>
            <person name="Leboeuf E."/>
            <person name="Mouille G."/>
            <person name="Leydecker M.-T."/>
            <person name="Talbotec J."/>
            <person name="Granier F."/>
            <person name="Lahaye M."/>
            <person name="Hoefte H."/>
            <person name="Truong H.-N."/>
        </authorList>
    </citation>
    <scope>CHARACTERIZATION</scope>
</reference>
<reference key="5">
    <citation type="journal article" date="2005" name="Planta">
        <title>QUASIMODO1 is expressed in vascular tissue of Arabidopsis thaliana inflorescence stems, and affects homogalacturonan and xylan biosynthesis.</title>
        <authorList>
            <person name="Orfila C."/>
            <person name="Sorensen S.O."/>
            <person name="Harholt J."/>
            <person name="Geshi N."/>
            <person name="Crombie H."/>
            <person name="Truong H.N."/>
            <person name="Reid J.S."/>
            <person name="Knox J.P."/>
            <person name="Scheller H.V."/>
        </authorList>
    </citation>
    <scope>FUNCTION</scope>
    <scope>TISSUE SPECIFICITY</scope>
    <scope>DISRUPTION PHENOTYPE</scope>
</reference>
<reference key="6">
    <citation type="journal article" date="2006" name="Proc. Natl. Acad. Sci. U.S.A.">
        <title>Functional identification of an Arabidopsis pectin biosynthetic homogalacturonan galacturonosyltransferase.</title>
        <authorList>
            <person name="Sterling J.D."/>
            <person name="Atmodjo M.A."/>
            <person name="Inwood S.E."/>
            <person name="Kumar Kolli V.S."/>
            <person name="Quigley H.F."/>
            <person name="Hahn M.G."/>
            <person name="Mohnen D."/>
        </authorList>
    </citation>
    <scope>GENE FAMILY</scope>
    <scope>NOMENCLATURE</scope>
</reference>
<reference key="7">
    <citation type="journal article" date="2008" name="Int. J. Biol. Macromol.">
        <title>Assessment of cell wall porosity in Arabidopsis thaliana by NMR spectroscopy.</title>
        <authorList>
            <person name="Rondeau-Mouro C."/>
            <person name="Defer D."/>
            <person name="Leboeuf E."/>
            <person name="Lahaye M."/>
        </authorList>
    </citation>
    <scope>DISRUPTION PHENOTYPE</scope>
</reference>
<reference key="8">
    <citation type="journal article" date="2009" name="Mol. Plant">
        <title>Arabidopsis thaliana T-DNA mutants implicate GAUT genes in the biosynthesis of pectin and xylan in cell walls and seed testa.</title>
        <authorList>
            <person name="Caffall K.H."/>
            <person name="Pattathil S."/>
            <person name="Phillips S.E."/>
            <person name="Hahn M.G."/>
            <person name="Mohnen D."/>
        </authorList>
    </citation>
    <scope>TISSUE SPECIFICITY</scope>
    <scope>DISRUPTION PHENOTYPE</scope>
</reference>
<evidence type="ECO:0000255" key="1"/>
<evidence type="ECO:0000269" key="2">
    <source>
    </source>
</evidence>
<evidence type="ECO:0000269" key="3">
    <source>
    </source>
</evidence>
<evidence type="ECO:0000269" key="4">
    <source>
    </source>
</evidence>
<evidence type="ECO:0000305" key="5"/>
<feature type="chain" id="PRO_0000206062" description="Galacturonosyltransferase 8">
    <location>
        <begin position="1"/>
        <end position="559"/>
    </location>
</feature>
<feature type="topological domain" description="Cytoplasmic" evidence="1">
    <location>
        <begin position="1"/>
        <end position="20"/>
    </location>
</feature>
<feature type="transmembrane region" description="Helical; Signal-anchor for type II membrane protein" evidence="1">
    <location>
        <begin position="21"/>
        <end position="41"/>
    </location>
</feature>
<feature type="topological domain" description="Lumenal" evidence="1">
    <location>
        <begin position="42"/>
        <end position="559"/>
    </location>
</feature>
<feature type="glycosylation site" description="N-linked (GlcNAc...) asparagine" evidence="1">
    <location>
        <position position="121"/>
    </location>
</feature>
<feature type="glycosylation site" description="N-linked (GlcNAc...) asparagine" evidence="1">
    <location>
        <position position="318"/>
    </location>
</feature>
<feature type="glycosylation site" description="N-linked (GlcNAc...) asparagine" evidence="1">
    <location>
        <position position="344"/>
    </location>
</feature>
<feature type="glycosylation site" description="N-linked (GlcNAc...) asparagine" evidence="1">
    <location>
        <position position="424"/>
    </location>
</feature>
<gene>
    <name type="primary">GAUT8</name>
    <name type="synonym">QUA1</name>
    <name type="ordered locus">At3g25140</name>
    <name type="ORF">MJL12.8</name>
</gene>
<keyword id="KW-0130">Cell adhesion</keyword>
<keyword id="KW-0961">Cell wall biogenesis/degradation</keyword>
<keyword id="KW-0325">Glycoprotein</keyword>
<keyword id="KW-0328">Glycosyltransferase</keyword>
<keyword id="KW-0333">Golgi apparatus</keyword>
<keyword id="KW-0472">Membrane</keyword>
<keyword id="KW-1185">Reference proteome</keyword>
<keyword id="KW-0735">Signal-anchor</keyword>
<keyword id="KW-0808">Transferase</keyword>
<keyword id="KW-0812">Transmembrane</keyword>
<keyword id="KW-1133">Transmembrane helix</keyword>
<dbReference type="EC" id="2.4.1.-"/>
<dbReference type="EMBL" id="AB026647">
    <property type="protein sequence ID" value="BAB02072.1"/>
    <property type="molecule type" value="Genomic_DNA"/>
</dbReference>
<dbReference type="EMBL" id="CP002686">
    <property type="protein sequence ID" value="AEE76983.1"/>
    <property type="molecule type" value="Genomic_DNA"/>
</dbReference>
<dbReference type="EMBL" id="AY099574">
    <property type="protein sequence ID" value="AAM20426.1"/>
    <property type="molecule type" value="mRNA"/>
</dbReference>
<dbReference type="EMBL" id="BT010393">
    <property type="protein sequence ID" value="AAQ56836.1"/>
    <property type="molecule type" value="mRNA"/>
</dbReference>
<dbReference type="RefSeq" id="NP_189150.1">
    <property type="nucleotide sequence ID" value="NM_113418.5"/>
</dbReference>
<dbReference type="SMR" id="Q9LSG3"/>
<dbReference type="BioGRID" id="7436">
    <property type="interactions" value="1"/>
</dbReference>
<dbReference type="FunCoup" id="Q9LSG3">
    <property type="interactions" value="1090"/>
</dbReference>
<dbReference type="IntAct" id="Q9LSG3">
    <property type="interactions" value="1"/>
</dbReference>
<dbReference type="STRING" id="3702.Q9LSG3"/>
<dbReference type="CAZy" id="GT8">
    <property type="family name" value="Glycosyltransferase Family 8"/>
</dbReference>
<dbReference type="GlyCosmos" id="Q9LSG3">
    <property type="glycosylation" value="4 sites, No reported glycans"/>
</dbReference>
<dbReference type="GlyGen" id="Q9LSG3">
    <property type="glycosylation" value="4 sites"/>
</dbReference>
<dbReference type="PaxDb" id="3702-AT3G25140.1"/>
<dbReference type="ProteomicsDB" id="221905"/>
<dbReference type="EnsemblPlants" id="AT3G25140.1">
    <property type="protein sequence ID" value="AT3G25140.1"/>
    <property type="gene ID" value="AT3G25140"/>
</dbReference>
<dbReference type="GeneID" id="822105"/>
<dbReference type="Gramene" id="AT3G25140.1">
    <property type="protein sequence ID" value="AT3G25140.1"/>
    <property type="gene ID" value="AT3G25140"/>
</dbReference>
<dbReference type="KEGG" id="ath:AT3G25140"/>
<dbReference type="Araport" id="AT3G25140"/>
<dbReference type="TAIR" id="AT3G25140">
    <property type="gene designation" value="QUA1"/>
</dbReference>
<dbReference type="eggNOG" id="ENOG502QS2Q">
    <property type="taxonomic scope" value="Eukaryota"/>
</dbReference>
<dbReference type="HOGENOM" id="CLU_010770_5_0_1"/>
<dbReference type="InParanoid" id="Q9LSG3"/>
<dbReference type="OMA" id="QADDHRN"/>
<dbReference type="PhylomeDB" id="Q9LSG3"/>
<dbReference type="BioCyc" id="ARA:AT3G25140-MONOMER"/>
<dbReference type="BioCyc" id="MetaCyc:MONOMER-2483"/>
<dbReference type="UniPathway" id="UPA00845"/>
<dbReference type="CD-CODE" id="4299E36E">
    <property type="entry name" value="Nucleolus"/>
</dbReference>
<dbReference type="PRO" id="PR:Q9LSG3"/>
<dbReference type="Proteomes" id="UP000006548">
    <property type="component" value="Chromosome 3"/>
</dbReference>
<dbReference type="ExpressionAtlas" id="Q9LSG3">
    <property type="expression patterns" value="baseline and differential"/>
</dbReference>
<dbReference type="GO" id="GO:0005768">
    <property type="term" value="C:endosome"/>
    <property type="evidence" value="ECO:0007005"/>
    <property type="project" value="TAIR"/>
</dbReference>
<dbReference type="GO" id="GO:0005794">
    <property type="term" value="C:Golgi apparatus"/>
    <property type="evidence" value="ECO:0007005"/>
    <property type="project" value="TAIR"/>
</dbReference>
<dbReference type="GO" id="GO:0000139">
    <property type="term" value="C:Golgi membrane"/>
    <property type="evidence" value="ECO:0007669"/>
    <property type="project" value="UniProtKB-SubCell"/>
</dbReference>
<dbReference type="GO" id="GO:0000138">
    <property type="term" value="C:Golgi trans cisterna"/>
    <property type="evidence" value="ECO:0007005"/>
    <property type="project" value="TAIR"/>
</dbReference>
<dbReference type="GO" id="GO:0005739">
    <property type="term" value="C:mitochondrion"/>
    <property type="evidence" value="ECO:0007005"/>
    <property type="project" value="TAIR"/>
</dbReference>
<dbReference type="GO" id="GO:0005802">
    <property type="term" value="C:trans-Golgi network"/>
    <property type="evidence" value="ECO:0007005"/>
    <property type="project" value="TAIR"/>
</dbReference>
<dbReference type="GO" id="GO:0016757">
    <property type="term" value="F:glycosyltransferase activity"/>
    <property type="evidence" value="ECO:0000250"/>
    <property type="project" value="TAIR"/>
</dbReference>
<dbReference type="GO" id="GO:0047262">
    <property type="term" value="F:polygalacturonate 4-alpha-galacturonosyltransferase activity"/>
    <property type="evidence" value="ECO:0000250"/>
    <property type="project" value="TAIR"/>
</dbReference>
<dbReference type="GO" id="GO:0007155">
    <property type="term" value="P:cell adhesion"/>
    <property type="evidence" value="ECO:0007669"/>
    <property type="project" value="UniProtKB-KW"/>
</dbReference>
<dbReference type="GO" id="GO:0010289">
    <property type="term" value="P:homogalacturonan biosynthetic process"/>
    <property type="evidence" value="ECO:0000315"/>
    <property type="project" value="TAIR"/>
</dbReference>
<dbReference type="GO" id="GO:0045489">
    <property type="term" value="P:pectin biosynthetic process"/>
    <property type="evidence" value="ECO:0000315"/>
    <property type="project" value="TAIR"/>
</dbReference>
<dbReference type="CDD" id="cd06429">
    <property type="entry name" value="GT8_like_1"/>
    <property type="match status" value="1"/>
</dbReference>
<dbReference type="Gene3D" id="3.90.550.10">
    <property type="entry name" value="Spore Coat Polysaccharide Biosynthesis Protein SpsA, Chain A"/>
    <property type="match status" value="1"/>
</dbReference>
<dbReference type="InterPro" id="IPR029993">
    <property type="entry name" value="GAUT"/>
</dbReference>
<dbReference type="InterPro" id="IPR002495">
    <property type="entry name" value="Glyco_trans_8"/>
</dbReference>
<dbReference type="InterPro" id="IPR029044">
    <property type="entry name" value="Nucleotide-diphossugar_trans"/>
</dbReference>
<dbReference type="PANTHER" id="PTHR32116">
    <property type="entry name" value="GALACTURONOSYLTRANSFERASE 4-RELATED"/>
    <property type="match status" value="1"/>
</dbReference>
<dbReference type="PANTHER" id="PTHR32116:SF31">
    <property type="entry name" value="GALACTURONOSYLTRANSFERASE 8"/>
    <property type="match status" value="1"/>
</dbReference>
<dbReference type="Pfam" id="PF01501">
    <property type="entry name" value="Glyco_transf_8"/>
    <property type="match status" value="1"/>
</dbReference>
<dbReference type="SUPFAM" id="SSF53448">
    <property type="entry name" value="Nucleotide-diphospho-sugar transferases"/>
    <property type="match status" value="1"/>
</dbReference>
<proteinExistence type="evidence at protein level"/>
<comment type="function">
    <text evidence="2">Alpha-1-4-D-galacturonosyltransferase involved in homogalacturonan (HGA) synthesis, a class of pectin which plays a role in cell adhesion.</text>
</comment>
<comment type="pathway">
    <text>Glycan metabolism; pectin biosynthesis.</text>
</comment>
<comment type="subcellular location">
    <subcellularLocation>
        <location evidence="5">Golgi apparatus membrane</location>
        <topology evidence="5">Single-pass type II membrane protein</topology>
    </subcellularLocation>
</comment>
<comment type="tissue specificity">
    <text evidence="2 4">Expressed in roots, inflorescences, flowers, siliques, leaves and stems. Localized to discrete cells of the vascular tissue and subepidermal layers.</text>
</comment>
<comment type="developmental stage">
    <text>Expressed at both the vegetative and floral stages.</text>
</comment>
<comment type="disruption phenotype">
    <text evidence="2 3 4">Embryo lethality. Reduced galacturonic acid and xylose content in cell wall. Altered cell wall porosity. Reduced vascular bundle.</text>
</comment>
<comment type="similarity">
    <text evidence="5">Belongs to the glycosyltransferase 8 family.</text>
</comment>
<protein>
    <recommendedName>
        <fullName>Galacturonosyltransferase 8</fullName>
        <ecNumber>2.4.1.-</ecNumber>
    </recommendedName>
    <alternativeName>
        <fullName>Glycosyltransferase QUASIMODO1</fullName>
    </alternativeName>
</protein>
<name>GAUT8_ARATH</name>
<organism>
    <name type="scientific">Arabidopsis thaliana</name>
    <name type="common">Mouse-ear cress</name>
    <dbReference type="NCBI Taxonomy" id="3702"/>
    <lineage>
        <taxon>Eukaryota</taxon>
        <taxon>Viridiplantae</taxon>
        <taxon>Streptophyta</taxon>
        <taxon>Embryophyta</taxon>
        <taxon>Tracheophyta</taxon>
        <taxon>Spermatophyta</taxon>
        <taxon>Magnoliopsida</taxon>
        <taxon>eudicotyledons</taxon>
        <taxon>Gunneridae</taxon>
        <taxon>Pentapetalae</taxon>
        <taxon>rosids</taxon>
        <taxon>malvids</taxon>
        <taxon>Brassicales</taxon>
        <taxon>Brassicaceae</taxon>
        <taxon>Camelineae</taxon>
        <taxon>Arabidopsis</taxon>
    </lineage>
</organism>